<feature type="chain" id="PRO_0000030091" description="S-adenosylmethionine decarboxylase 1 beta chain" evidence="1">
    <location>
        <begin position="1"/>
        <end position="65"/>
    </location>
</feature>
<feature type="chain" id="PRO_0000030092" description="S-adenosylmethionine decarboxylase 1 alpha chain" evidence="1">
    <location>
        <begin position="66"/>
        <end position="130"/>
    </location>
</feature>
<feature type="active site" description="Schiff-base intermediate with substrate; via pyruvic acid" evidence="2">
    <location>
        <position position="66"/>
    </location>
</feature>
<feature type="active site" description="Proton acceptor; for processing activity" evidence="2">
    <location>
        <position position="71"/>
    </location>
</feature>
<feature type="active site" description="Proton donor; for catalytic activity" evidence="2">
    <location>
        <position position="86"/>
    </location>
</feature>
<feature type="site" description="Cleavage (non-hydrolytic); by autolysis" evidence="2">
    <location>
        <begin position="65"/>
        <end position="66"/>
    </location>
</feature>
<feature type="modified residue" description="Pyruvic acid (Ser); by autocatalysis" evidence="2">
    <location>
        <position position="66"/>
    </location>
</feature>
<protein>
    <recommendedName>
        <fullName evidence="2">S-adenosylmethionine decarboxylase proenzyme 1</fullName>
        <shortName evidence="2">AdoMetDC 1</shortName>
        <shortName evidence="2">SAMDC 1</shortName>
        <ecNumber evidence="2">4.1.1.50</ecNumber>
    </recommendedName>
    <component>
        <recommendedName>
            <fullName>S-adenosylmethionine decarboxylase 1 beta chain</fullName>
        </recommendedName>
    </component>
    <component>
        <recommendedName>
            <fullName>S-adenosylmethionine decarboxylase 1 alpha chain</fullName>
        </recommendedName>
    </component>
</protein>
<organism>
    <name type="scientific">Bacillus cereus (strain ZK / E33L)</name>
    <dbReference type="NCBI Taxonomy" id="288681"/>
    <lineage>
        <taxon>Bacteria</taxon>
        <taxon>Bacillati</taxon>
        <taxon>Bacillota</taxon>
        <taxon>Bacilli</taxon>
        <taxon>Bacillales</taxon>
        <taxon>Bacillaceae</taxon>
        <taxon>Bacillus</taxon>
        <taxon>Bacillus cereus group</taxon>
    </lineage>
</organism>
<keyword id="KW-0068">Autocatalytic cleavage</keyword>
<keyword id="KW-0210">Decarboxylase</keyword>
<keyword id="KW-0456">Lyase</keyword>
<keyword id="KW-0620">Polyamine biosynthesis</keyword>
<keyword id="KW-0670">Pyruvate</keyword>
<keyword id="KW-0949">S-adenosyl-L-methionine</keyword>
<keyword id="KW-0704">Schiff base</keyword>
<keyword id="KW-0745">Spermidine biosynthesis</keyword>
<keyword id="KW-0865">Zymogen</keyword>
<comment type="function">
    <text evidence="2">Catalyzes the decarboxylation of S-adenosylmethionine to S-adenosylmethioninamine (dcAdoMet), the propylamine donor required for the synthesis of the polyamines spermine and spermidine from the diamine putrescine.</text>
</comment>
<comment type="catalytic activity">
    <reaction evidence="2">
        <text>S-adenosyl-L-methionine + H(+) = S-adenosyl 3-(methylsulfanyl)propylamine + CO2</text>
        <dbReference type="Rhea" id="RHEA:15981"/>
        <dbReference type="ChEBI" id="CHEBI:15378"/>
        <dbReference type="ChEBI" id="CHEBI:16526"/>
        <dbReference type="ChEBI" id="CHEBI:57443"/>
        <dbReference type="ChEBI" id="CHEBI:59789"/>
        <dbReference type="EC" id="4.1.1.50"/>
    </reaction>
</comment>
<comment type="cofactor">
    <cofactor evidence="2">
        <name>pyruvate</name>
        <dbReference type="ChEBI" id="CHEBI:15361"/>
    </cofactor>
    <text evidence="2">Binds 1 pyruvoyl group covalently per subunit.</text>
</comment>
<comment type="pathway">
    <text evidence="2">Amine and polyamine biosynthesis; S-adenosylmethioninamine biosynthesis; S-adenosylmethioninamine from S-adenosyl-L-methionine: step 1/1.</text>
</comment>
<comment type="subunit">
    <text evidence="2">Heterotetramer of two alpha and two beta chains arranged as a dimer of alpha/beta heterodimers.</text>
</comment>
<comment type="PTM">
    <text evidence="2">Is synthesized initially as an inactive proenzyme. Formation of the active enzyme involves a self-maturation process in which the active site pyruvoyl group is generated from an internal serine residue via an autocatalytic post-translational modification. Two non-identical subunits are generated from the proenzyme in this reaction, and the pyruvate is formed at the N-terminus of the alpha chain, which is derived from the carboxyl end of the proenzyme. The post-translation cleavage follows an unusual pathway, termed non-hydrolytic serinolysis, in which the side chain hydroxyl group of the serine supplies its oxygen atom to form the C-terminus of the beta chain, while the remainder of the serine residue undergoes an oxidative deamination to produce ammonia and the pyruvoyl group blocking the N-terminus of the alpha chain.</text>
</comment>
<comment type="similarity">
    <text evidence="2">Belongs to the prokaryotic AdoMetDC family. Type 1 subfamily.</text>
</comment>
<sequence length="130" mass="14487">MDTMDTMGRHVIAELWDCDFDKLNDMPYIEQLFVDAALRAGAEVREVAFHKFAPQGVSGVVIISESHLTIHSFPEHGYASIDVYTCGDRIDPNVAAEYIAEGLNAKTRESIELPRGTGSFEIKQRETKAL</sequence>
<dbReference type="EC" id="4.1.1.50" evidence="2"/>
<dbReference type="EMBL" id="CP000001">
    <property type="protein sequence ID" value="AAU15947.1"/>
    <property type="molecule type" value="Genomic_DNA"/>
</dbReference>
<dbReference type="SMR" id="Q633L5"/>
<dbReference type="KEGG" id="bcz:BCE33L4323"/>
<dbReference type="UniPathway" id="UPA00331">
    <property type="reaction ID" value="UER00451"/>
</dbReference>
<dbReference type="Proteomes" id="UP000002612">
    <property type="component" value="Chromosome"/>
</dbReference>
<dbReference type="GO" id="GO:0005829">
    <property type="term" value="C:cytosol"/>
    <property type="evidence" value="ECO:0007669"/>
    <property type="project" value="TreeGrafter"/>
</dbReference>
<dbReference type="GO" id="GO:0004014">
    <property type="term" value="F:adenosylmethionine decarboxylase activity"/>
    <property type="evidence" value="ECO:0007669"/>
    <property type="project" value="UniProtKB-UniRule"/>
</dbReference>
<dbReference type="GO" id="GO:0008295">
    <property type="term" value="P:spermidine biosynthetic process"/>
    <property type="evidence" value="ECO:0007669"/>
    <property type="project" value="UniProtKB-UniRule"/>
</dbReference>
<dbReference type="FunFam" id="3.30.160.750:FF:000001">
    <property type="entry name" value="S-adenosylmethionine decarboxylase proenzyme"/>
    <property type="match status" value="1"/>
</dbReference>
<dbReference type="FunFam" id="3.30.360.110:FF:000001">
    <property type="entry name" value="S-adenosylmethionine decarboxylase proenzyme"/>
    <property type="match status" value="1"/>
</dbReference>
<dbReference type="Gene3D" id="3.30.160.750">
    <property type="match status" value="1"/>
</dbReference>
<dbReference type="Gene3D" id="3.30.360.110">
    <property type="entry name" value="S-adenosylmethionine decarboxylase domain"/>
    <property type="match status" value="1"/>
</dbReference>
<dbReference type="HAMAP" id="MF_00464">
    <property type="entry name" value="AdoMetDC_1"/>
    <property type="match status" value="1"/>
</dbReference>
<dbReference type="InterPro" id="IPR042286">
    <property type="entry name" value="AdoMetDC_C"/>
</dbReference>
<dbReference type="InterPro" id="IPR003826">
    <property type="entry name" value="AdoMetDC_fam_prok"/>
</dbReference>
<dbReference type="InterPro" id="IPR042284">
    <property type="entry name" value="AdoMetDC_N"/>
</dbReference>
<dbReference type="InterPro" id="IPR016067">
    <property type="entry name" value="S-AdoMet_deCO2ase_core"/>
</dbReference>
<dbReference type="InterPro" id="IPR017716">
    <property type="entry name" value="S-AdoMet_deCOase_pro-enz"/>
</dbReference>
<dbReference type="NCBIfam" id="TIGR03330">
    <property type="entry name" value="SAM_DCase_Bsu"/>
    <property type="match status" value="1"/>
</dbReference>
<dbReference type="PANTHER" id="PTHR33866">
    <property type="entry name" value="S-ADENOSYLMETHIONINE DECARBOXYLASE PROENZYME"/>
    <property type="match status" value="1"/>
</dbReference>
<dbReference type="PANTHER" id="PTHR33866:SF2">
    <property type="entry name" value="S-ADENOSYLMETHIONINE DECARBOXYLASE PROENZYME"/>
    <property type="match status" value="1"/>
</dbReference>
<dbReference type="Pfam" id="PF02675">
    <property type="entry name" value="AdoMet_dc"/>
    <property type="match status" value="1"/>
</dbReference>
<dbReference type="SUPFAM" id="SSF56276">
    <property type="entry name" value="S-adenosylmethionine decarboxylase"/>
    <property type="match status" value="1"/>
</dbReference>
<proteinExistence type="inferred from homology"/>
<accession>Q633L5</accession>
<name>SPEH1_BACCZ</name>
<gene>
    <name evidence="2" type="primary">speH1</name>
    <name type="ordered locus">BCE33L4323</name>
</gene>
<evidence type="ECO:0000250" key="1"/>
<evidence type="ECO:0000255" key="2">
    <source>
        <dbReference type="HAMAP-Rule" id="MF_00464"/>
    </source>
</evidence>
<reference key="1">
    <citation type="journal article" date="2006" name="J. Bacteriol.">
        <title>Pathogenomic sequence analysis of Bacillus cereus and Bacillus thuringiensis isolates closely related to Bacillus anthracis.</title>
        <authorList>
            <person name="Han C.S."/>
            <person name="Xie G."/>
            <person name="Challacombe J.F."/>
            <person name="Altherr M.R."/>
            <person name="Bhotika S.S."/>
            <person name="Bruce D."/>
            <person name="Campbell C.S."/>
            <person name="Campbell M.L."/>
            <person name="Chen J."/>
            <person name="Chertkov O."/>
            <person name="Cleland C."/>
            <person name="Dimitrijevic M."/>
            <person name="Doggett N.A."/>
            <person name="Fawcett J.J."/>
            <person name="Glavina T."/>
            <person name="Goodwin L.A."/>
            <person name="Hill K.K."/>
            <person name="Hitchcock P."/>
            <person name="Jackson P.J."/>
            <person name="Keim P."/>
            <person name="Kewalramani A.R."/>
            <person name="Longmire J."/>
            <person name="Lucas S."/>
            <person name="Malfatti S."/>
            <person name="McMurry K."/>
            <person name="Meincke L.J."/>
            <person name="Misra M."/>
            <person name="Moseman B.L."/>
            <person name="Mundt M."/>
            <person name="Munk A.C."/>
            <person name="Okinaka R.T."/>
            <person name="Parson-Quintana B."/>
            <person name="Reilly L.P."/>
            <person name="Richardson P."/>
            <person name="Robinson D.L."/>
            <person name="Rubin E."/>
            <person name="Saunders E."/>
            <person name="Tapia R."/>
            <person name="Tesmer J.G."/>
            <person name="Thayer N."/>
            <person name="Thompson L.S."/>
            <person name="Tice H."/>
            <person name="Ticknor L.O."/>
            <person name="Wills P.L."/>
            <person name="Brettin T.S."/>
            <person name="Gilna P."/>
        </authorList>
    </citation>
    <scope>NUCLEOTIDE SEQUENCE [LARGE SCALE GENOMIC DNA]</scope>
    <source>
        <strain>ZK / E33L</strain>
    </source>
</reference>